<organism>
    <name type="scientific">Saccharolobus islandicus (strain L.S.2.15 / Lassen #1)</name>
    <name type="common">Sulfolobus islandicus</name>
    <dbReference type="NCBI Taxonomy" id="429572"/>
    <lineage>
        <taxon>Archaea</taxon>
        <taxon>Thermoproteota</taxon>
        <taxon>Thermoprotei</taxon>
        <taxon>Sulfolobales</taxon>
        <taxon>Sulfolobaceae</taxon>
        <taxon>Saccharolobus</taxon>
    </lineage>
</organism>
<evidence type="ECO:0000255" key="1">
    <source>
        <dbReference type="HAMAP-Rule" id="MF_00411"/>
    </source>
</evidence>
<comment type="function">
    <text evidence="1">DNA-dependent RNA polymerase (RNAP) catalyzes the transcription of DNA into RNA using the four ribonucleoside triphosphates as substrates. Forms part of the jaw domain.</text>
</comment>
<comment type="catalytic activity">
    <reaction evidence="1">
        <text>RNA(n) + a ribonucleoside 5'-triphosphate = RNA(n+1) + diphosphate</text>
        <dbReference type="Rhea" id="RHEA:21248"/>
        <dbReference type="Rhea" id="RHEA-COMP:14527"/>
        <dbReference type="Rhea" id="RHEA-COMP:17342"/>
        <dbReference type="ChEBI" id="CHEBI:33019"/>
        <dbReference type="ChEBI" id="CHEBI:61557"/>
        <dbReference type="ChEBI" id="CHEBI:140395"/>
        <dbReference type="EC" id="2.7.7.6"/>
    </reaction>
</comment>
<comment type="subunit">
    <text evidence="1">Part of the RNA polymerase complex.</text>
</comment>
<comment type="subcellular location">
    <subcellularLocation>
        <location evidence="1">Cytoplasm</location>
    </subcellularLocation>
</comment>
<comment type="similarity">
    <text evidence="1">Belongs to the RNA polymerase beta' chain family.</text>
</comment>
<gene>
    <name evidence="1" type="primary">rpo1C</name>
    <name evidence="1" type="synonym">rpoA2</name>
    <name type="ordered locus">LS215_2022</name>
</gene>
<keyword id="KW-0963">Cytoplasm</keyword>
<keyword id="KW-0238">DNA-binding</keyword>
<keyword id="KW-0240">DNA-directed RNA polymerase</keyword>
<keyword id="KW-0548">Nucleotidyltransferase</keyword>
<keyword id="KW-0804">Transcription</keyword>
<keyword id="KW-0808">Transferase</keyword>
<accession>C3MRK4</accession>
<feature type="chain" id="PRO_1000205985" description="DNA-directed RNA polymerase subunit Rpo1C">
    <location>
        <begin position="1"/>
        <end position="392"/>
    </location>
</feature>
<reference key="1">
    <citation type="journal article" date="2009" name="Proc. Natl. Acad. Sci. U.S.A.">
        <title>Biogeography of the Sulfolobus islandicus pan-genome.</title>
        <authorList>
            <person name="Reno M.L."/>
            <person name="Held N.L."/>
            <person name="Fields C.J."/>
            <person name="Burke P.V."/>
            <person name="Whitaker R.J."/>
        </authorList>
    </citation>
    <scope>NUCLEOTIDE SEQUENCE [LARGE SCALE GENOMIC DNA]</scope>
    <source>
        <strain>L.S.2.15 / Lassen #1</strain>
    </source>
</reference>
<sequence>MIDEKDKSYLEEKVKQASNILPQKIVEDLKNLISNKEVLVTRDEIDKIFDLAIKEYSEGLIAPGEAIGIVAAQSVGEPGTQMTLRTFHFAGIRELNVTLGLPRLIEIVDAKKVPSTPMMTIYLTDEYKHDKEKALEVARKLEYTKIENVVSSTSIDIASMSIILQLDNEMLKDKGVTVDDVKKAINRLKLGEFVIDESEGNTLNISFANIDSIAALFKLRDKILNTKIKGIKGIKRAIVQKKGDEYIILTDGSNLSGVLSVKGVDIAKVETNNIREIEEVFGIEAAREIIIREISKVLAEQGLDVDMRHILLVADVMTRTGVVRQIGRHGVTGEKNSVLARAAFEVTVKHLLDAAARGDVEEFKGVVENIIIGHPIKLGTGMVELTMRPILR</sequence>
<protein>
    <recommendedName>
        <fullName evidence="1">DNA-directed RNA polymerase subunit Rpo1C</fullName>
        <ecNumber evidence="1">2.7.7.6</ecNumber>
    </recommendedName>
    <alternativeName>
        <fullName evidence="1">DNA-directed RNA polymerase subunit A''</fullName>
    </alternativeName>
</protein>
<name>RPO1C_SACI2</name>
<proteinExistence type="inferred from homology"/>
<dbReference type="EC" id="2.7.7.6" evidence="1"/>
<dbReference type="EMBL" id="CP001399">
    <property type="protein sequence ID" value="ACP36017.1"/>
    <property type="molecule type" value="Genomic_DNA"/>
</dbReference>
<dbReference type="RefSeq" id="WP_012711886.1">
    <property type="nucleotide sequence ID" value="NC_012589.1"/>
</dbReference>
<dbReference type="SMR" id="C3MRK4"/>
<dbReference type="GeneID" id="84062225"/>
<dbReference type="KEGG" id="sis:LS215_2022"/>
<dbReference type="HOGENOM" id="CLU_037097_1_0_2"/>
<dbReference type="OrthoDB" id="372142at2157"/>
<dbReference type="Proteomes" id="UP000001747">
    <property type="component" value="Chromosome"/>
</dbReference>
<dbReference type="GO" id="GO:0005737">
    <property type="term" value="C:cytoplasm"/>
    <property type="evidence" value="ECO:0007669"/>
    <property type="project" value="UniProtKB-SubCell"/>
</dbReference>
<dbReference type="GO" id="GO:0000428">
    <property type="term" value="C:DNA-directed RNA polymerase complex"/>
    <property type="evidence" value="ECO:0007669"/>
    <property type="project" value="UniProtKB-KW"/>
</dbReference>
<dbReference type="GO" id="GO:0003677">
    <property type="term" value="F:DNA binding"/>
    <property type="evidence" value="ECO:0007669"/>
    <property type="project" value="UniProtKB-UniRule"/>
</dbReference>
<dbReference type="GO" id="GO:0003899">
    <property type="term" value="F:DNA-directed RNA polymerase activity"/>
    <property type="evidence" value="ECO:0007669"/>
    <property type="project" value="UniProtKB-UniRule"/>
</dbReference>
<dbReference type="GO" id="GO:0006351">
    <property type="term" value="P:DNA-templated transcription"/>
    <property type="evidence" value="ECO:0007669"/>
    <property type="project" value="UniProtKB-UniRule"/>
</dbReference>
<dbReference type="CDD" id="cd06528">
    <property type="entry name" value="RNAP_A"/>
    <property type="match status" value="1"/>
</dbReference>
<dbReference type="Gene3D" id="1.10.150.390">
    <property type="match status" value="1"/>
</dbReference>
<dbReference type="HAMAP" id="MF_00411">
    <property type="entry name" value="RNApol_arch_Rpo1C"/>
    <property type="match status" value="1"/>
</dbReference>
<dbReference type="InterPro" id="IPR045867">
    <property type="entry name" value="DNA-dir_RpoC_beta_prime"/>
</dbReference>
<dbReference type="InterPro" id="IPR007081">
    <property type="entry name" value="RNA_pol_Rpb1_5"/>
</dbReference>
<dbReference type="InterPro" id="IPR012757">
    <property type="entry name" value="RPO1C"/>
</dbReference>
<dbReference type="NCBIfam" id="TIGR02389">
    <property type="entry name" value="RNA_pol_rpoA2"/>
    <property type="match status" value="1"/>
</dbReference>
<dbReference type="PANTHER" id="PTHR19376">
    <property type="entry name" value="DNA-DIRECTED RNA POLYMERASE"/>
    <property type="match status" value="1"/>
</dbReference>
<dbReference type="PANTHER" id="PTHR19376:SF32">
    <property type="entry name" value="DNA-DIRECTED RNA POLYMERASE III SUBUNIT RPC1"/>
    <property type="match status" value="1"/>
</dbReference>
<dbReference type="Pfam" id="PF04998">
    <property type="entry name" value="RNA_pol_Rpb1_5"/>
    <property type="match status" value="1"/>
</dbReference>
<dbReference type="SUPFAM" id="SSF64484">
    <property type="entry name" value="beta and beta-prime subunits of DNA dependent RNA-polymerase"/>
    <property type="match status" value="1"/>
</dbReference>